<sequence>MSSRILTSDVIGIDALLHDHHAVLAKSTGGAVAVFANNAPAFYAVTPARMAELLALEEKLSHPGSDVALDAQFYEEPETAHVAIPCGKFAMYPAWQPDADFQRQAALWGVALRDPVTAEELAAFIAYWQAEGKVFHHIQWQQKLARSVQISRSSNGGMPQRDINSVSEPDNHIPPGFRG</sequence>
<feature type="chain" id="PRO_1000149694" description="Replication restart protein DnaT">
    <location>
        <begin position="1"/>
        <end position="179"/>
    </location>
</feature>
<feature type="region of interest" description="Disordered" evidence="2">
    <location>
        <begin position="151"/>
        <end position="179"/>
    </location>
</feature>
<feature type="compositionally biased region" description="Polar residues" evidence="2">
    <location>
        <begin position="151"/>
        <end position="168"/>
    </location>
</feature>
<proteinExistence type="inferred from homology"/>
<accession>A9MRX5</accession>
<dbReference type="EMBL" id="CP000880">
    <property type="protein sequence ID" value="ABX22877.1"/>
    <property type="molecule type" value="Genomic_DNA"/>
</dbReference>
<dbReference type="SMR" id="A9MRX5"/>
<dbReference type="STRING" id="41514.SARI_03036"/>
<dbReference type="KEGG" id="ses:SARI_03036"/>
<dbReference type="HOGENOM" id="CLU_1501592_0_0_6"/>
<dbReference type="Proteomes" id="UP000002084">
    <property type="component" value="Chromosome"/>
</dbReference>
<dbReference type="GO" id="GO:1990077">
    <property type="term" value="C:primosome complex"/>
    <property type="evidence" value="ECO:0007669"/>
    <property type="project" value="UniProtKB-KW"/>
</dbReference>
<dbReference type="GO" id="GO:0006269">
    <property type="term" value="P:DNA replication, synthesis of primer"/>
    <property type="evidence" value="ECO:0007669"/>
    <property type="project" value="UniProtKB-UniRule"/>
</dbReference>
<dbReference type="Gene3D" id="1.10.8.1180">
    <property type="match status" value="1"/>
</dbReference>
<dbReference type="HAMAP" id="MF_01061">
    <property type="entry name" value="DnaT"/>
    <property type="match status" value="1"/>
</dbReference>
<dbReference type="InterPro" id="IPR020917">
    <property type="entry name" value="DnaT"/>
</dbReference>
<dbReference type="InterPro" id="IPR040480">
    <property type="entry name" value="DnaT_DNA_bind"/>
</dbReference>
<dbReference type="NCBIfam" id="NF002770">
    <property type="entry name" value="PRK02854.1"/>
    <property type="match status" value="1"/>
</dbReference>
<dbReference type="Pfam" id="PF17948">
    <property type="entry name" value="DnaT"/>
    <property type="match status" value="1"/>
</dbReference>
<organism>
    <name type="scientific">Salmonella arizonae (strain ATCC BAA-731 / CDC346-86 / RSK2980)</name>
    <dbReference type="NCBI Taxonomy" id="41514"/>
    <lineage>
        <taxon>Bacteria</taxon>
        <taxon>Pseudomonadati</taxon>
        <taxon>Pseudomonadota</taxon>
        <taxon>Gammaproteobacteria</taxon>
        <taxon>Enterobacterales</taxon>
        <taxon>Enterobacteriaceae</taxon>
        <taxon>Salmonella</taxon>
    </lineage>
</organism>
<name>DNAT_SALAR</name>
<reference key="1">
    <citation type="submission" date="2007-11" db="EMBL/GenBank/DDBJ databases">
        <authorList>
            <consortium name="The Salmonella enterica serovar Arizonae Genome Sequencing Project"/>
            <person name="McClelland M."/>
            <person name="Sanderson E.K."/>
            <person name="Porwollik S."/>
            <person name="Spieth J."/>
            <person name="Clifton W.S."/>
            <person name="Fulton R."/>
            <person name="Chunyan W."/>
            <person name="Wollam A."/>
            <person name="Shah N."/>
            <person name="Pepin K."/>
            <person name="Bhonagiri V."/>
            <person name="Nash W."/>
            <person name="Johnson M."/>
            <person name="Thiruvilangam P."/>
            <person name="Wilson R."/>
        </authorList>
    </citation>
    <scope>NUCLEOTIDE SEQUENCE [LARGE SCALE GENOMIC DNA]</scope>
    <source>
        <strain>ATCC BAA-731 / CDC346-86 / RSK2980</strain>
    </source>
</reference>
<comment type="function">
    <text evidence="1">Involved in the restart of stalled replication forks, which reloads the replicative helicase on sites other than the origin of replication. Can function in multiple replication restart pathways. Displaces ssDNA from a PriB-ssDNA complex. Probably forms a spiral filament on ssDNA.</text>
</comment>
<comment type="subunit">
    <text evidence="1">Homooligomerizes. Interacts with PriB. Component of the replication restart primosome. Primosome assembly occurs via a 'hand-off' mechanism. PriA binds to replication forks, subsequently PriB then DnaT bind; DnaT then displaces ssDNA to generate the helicase loading substrate.</text>
</comment>
<comment type="similarity">
    <text evidence="1">Belongs to the DnaT family.</text>
</comment>
<protein>
    <recommendedName>
        <fullName evidence="1">Replication restart protein DnaT</fullName>
    </recommendedName>
</protein>
<keyword id="KW-0235">DNA replication</keyword>
<keyword id="KW-0238">DNA-binding</keyword>
<keyword id="KW-0639">Primosome</keyword>
<keyword id="KW-1185">Reference proteome</keyword>
<gene>
    <name evidence="1" type="primary">dnaT</name>
    <name type="ordered locus">SARI_03036</name>
</gene>
<evidence type="ECO:0000255" key="1">
    <source>
        <dbReference type="HAMAP-Rule" id="MF_01061"/>
    </source>
</evidence>
<evidence type="ECO:0000256" key="2">
    <source>
        <dbReference type="SAM" id="MobiDB-lite"/>
    </source>
</evidence>